<name>DEF_SHISS</name>
<sequence length="169" mass="19342">MSVLQVLHIPDERLRKVAKPVEEVNAEIQRIVDDMFETMYAEEGIGLAATQVDIHQRIIVIDVSENRDERLVLINPELLEKSGETGIEEGCLSIPEQRALVPRAEKVKIRALDRDGKPFELEAEGLLAICIQHEMDHLVGKLFMDYLSPLKQQRIRQKVEKLDRLKARA</sequence>
<comment type="function">
    <text evidence="1">Removes the formyl group from the N-terminal Met of newly synthesized proteins. Requires at least a dipeptide for an efficient rate of reaction. N-terminal L-methionine is a prerequisite for activity but the enzyme has broad specificity at other positions.</text>
</comment>
<comment type="catalytic activity">
    <reaction evidence="1">
        <text>N-terminal N-formyl-L-methionyl-[peptide] + H2O = N-terminal L-methionyl-[peptide] + formate</text>
        <dbReference type="Rhea" id="RHEA:24420"/>
        <dbReference type="Rhea" id="RHEA-COMP:10639"/>
        <dbReference type="Rhea" id="RHEA-COMP:10640"/>
        <dbReference type="ChEBI" id="CHEBI:15377"/>
        <dbReference type="ChEBI" id="CHEBI:15740"/>
        <dbReference type="ChEBI" id="CHEBI:49298"/>
        <dbReference type="ChEBI" id="CHEBI:64731"/>
        <dbReference type="EC" id="3.5.1.88"/>
    </reaction>
</comment>
<comment type="cofactor">
    <cofactor evidence="1">
        <name>Fe(2+)</name>
        <dbReference type="ChEBI" id="CHEBI:29033"/>
    </cofactor>
    <text evidence="1">Binds 1 Fe(2+) ion.</text>
</comment>
<comment type="similarity">
    <text evidence="1">Belongs to the polypeptide deformylase family.</text>
</comment>
<protein>
    <recommendedName>
        <fullName evidence="1">Peptide deformylase</fullName>
        <shortName evidence="1">PDF</shortName>
        <ecNumber evidence="1">3.5.1.88</ecNumber>
    </recommendedName>
    <alternativeName>
        <fullName evidence="1">Polypeptide deformylase</fullName>
    </alternativeName>
</protein>
<gene>
    <name evidence="1" type="primary">def</name>
    <name type="ordered locus">SSON_3427</name>
</gene>
<organism>
    <name type="scientific">Shigella sonnei (strain Ss046)</name>
    <dbReference type="NCBI Taxonomy" id="300269"/>
    <lineage>
        <taxon>Bacteria</taxon>
        <taxon>Pseudomonadati</taxon>
        <taxon>Pseudomonadota</taxon>
        <taxon>Gammaproteobacteria</taxon>
        <taxon>Enterobacterales</taxon>
        <taxon>Enterobacteriaceae</taxon>
        <taxon>Shigella</taxon>
    </lineage>
</organism>
<keyword id="KW-0378">Hydrolase</keyword>
<keyword id="KW-0408">Iron</keyword>
<keyword id="KW-0479">Metal-binding</keyword>
<keyword id="KW-0648">Protein biosynthesis</keyword>
<keyword id="KW-1185">Reference proteome</keyword>
<feature type="chain" id="PRO_0000301099" description="Peptide deformylase">
    <location>
        <begin position="1"/>
        <end position="169"/>
    </location>
</feature>
<feature type="active site" evidence="1">
    <location>
        <position position="134"/>
    </location>
</feature>
<feature type="binding site" evidence="1">
    <location>
        <position position="91"/>
    </location>
    <ligand>
        <name>Fe cation</name>
        <dbReference type="ChEBI" id="CHEBI:24875"/>
    </ligand>
</feature>
<feature type="binding site" evidence="1">
    <location>
        <position position="133"/>
    </location>
    <ligand>
        <name>Fe cation</name>
        <dbReference type="ChEBI" id="CHEBI:24875"/>
    </ligand>
</feature>
<feature type="binding site" evidence="1">
    <location>
        <position position="137"/>
    </location>
    <ligand>
        <name>Fe cation</name>
        <dbReference type="ChEBI" id="CHEBI:24875"/>
    </ligand>
</feature>
<accession>Q3YWX3</accession>
<evidence type="ECO:0000255" key="1">
    <source>
        <dbReference type="HAMAP-Rule" id="MF_00163"/>
    </source>
</evidence>
<proteinExistence type="inferred from homology"/>
<reference key="1">
    <citation type="journal article" date="2005" name="Nucleic Acids Res.">
        <title>Genome dynamics and diversity of Shigella species, the etiologic agents of bacillary dysentery.</title>
        <authorList>
            <person name="Yang F."/>
            <person name="Yang J."/>
            <person name="Zhang X."/>
            <person name="Chen L."/>
            <person name="Jiang Y."/>
            <person name="Yan Y."/>
            <person name="Tang X."/>
            <person name="Wang J."/>
            <person name="Xiong Z."/>
            <person name="Dong J."/>
            <person name="Xue Y."/>
            <person name="Zhu Y."/>
            <person name="Xu X."/>
            <person name="Sun L."/>
            <person name="Chen S."/>
            <person name="Nie H."/>
            <person name="Peng J."/>
            <person name="Xu J."/>
            <person name="Wang Y."/>
            <person name="Yuan Z."/>
            <person name="Wen Y."/>
            <person name="Yao Z."/>
            <person name="Shen Y."/>
            <person name="Qiang B."/>
            <person name="Hou Y."/>
            <person name="Yu J."/>
            <person name="Jin Q."/>
        </authorList>
    </citation>
    <scope>NUCLEOTIDE SEQUENCE [LARGE SCALE GENOMIC DNA]</scope>
    <source>
        <strain>Ss046</strain>
    </source>
</reference>
<dbReference type="EC" id="3.5.1.88" evidence="1"/>
<dbReference type="EMBL" id="CP000038">
    <property type="protein sequence ID" value="AAZ89989.1"/>
    <property type="molecule type" value="Genomic_DNA"/>
</dbReference>
<dbReference type="RefSeq" id="WP_000114986.1">
    <property type="nucleotide sequence ID" value="NC_007384.1"/>
</dbReference>
<dbReference type="SMR" id="Q3YWX3"/>
<dbReference type="GeneID" id="93778701"/>
<dbReference type="KEGG" id="ssn:SSON_3427"/>
<dbReference type="HOGENOM" id="CLU_061901_2_1_6"/>
<dbReference type="Proteomes" id="UP000002529">
    <property type="component" value="Chromosome"/>
</dbReference>
<dbReference type="GO" id="GO:0046872">
    <property type="term" value="F:metal ion binding"/>
    <property type="evidence" value="ECO:0007669"/>
    <property type="project" value="UniProtKB-KW"/>
</dbReference>
<dbReference type="GO" id="GO:0042586">
    <property type="term" value="F:peptide deformylase activity"/>
    <property type="evidence" value="ECO:0007669"/>
    <property type="project" value="UniProtKB-UniRule"/>
</dbReference>
<dbReference type="GO" id="GO:0043686">
    <property type="term" value="P:co-translational protein modification"/>
    <property type="evidence" value="ECO:0007669"/>
    <property type="project" value="TreeGrafter"/>
</dbReference>
<dbReference type="GO" id="GO:0006412">
    <property type="term" value="P:translation"/>
    <property type="evidence" value="ECO:0007669"/>
    <property type="project" value="UniProtKB-UniRule"/>
</dbReference>
<dbReference type="CDD" id="cd00487">
    <property type="entry name" value="Pep_deformylase"/>
    <property type="match status" value="1"/>
</dbReference>
<dbReference type="FunFam" id="3.90.45.10:FF:000001">
    <property type="entry name" value="Peptide deformylase"/>
    <property type="match status" value="1"/>
</dbReference>
<dbReference type="Gene3D" id="3.90.45.10">
    <property type="entry name" value="Peptide deformylase"/>
    <property type="match status" value="1"/>
</dbReference>
<dbReference type="HAMAP" id="MF_00163">
    <property type="entry name" value="Pep_deformylase"/>
    <property type="match status" value="1"/>
</dbReference>
<dbReference type="InterPro" id="IPR023635">
    <property type="entry name" value="Peptide_deformylase"/>
</dbReference>
<dbReference type="InterPro" id="IPR036821">
    <property type="entry name" value="Peptide_deformylase_sf"/>
</dbReference>
<dbReference type="NCBIfam" id="TIGR00079">
    <property type="entry name" value="pept_deformyl"/>
    <property type="match status" value="1"/>
</dbReference>
<dbReference type="NCBIfam" id="NF001159">
    <property type="entry name" value="PRK00150.1-3"/>
    <property type="match status" value="1"/>
</dbReference>
<dbReference type="PANTHER" id="PTHR10458">
    <property type="entry name" value="PEPTIDE DEFORMYLASE"/>
    <property type="match status" value="1"/>
</dbReference>
<dbReference type="PANTHER" id="PTHR10458:SF21">
    <property type="entry name" value="PEPTIDE DEFORMYLASE"/>
    <property type="match status" value="1"/>
</dbReference>
<dbReference type="Pfam" id="PF01327">
    <property type="entry name" value="Pep_deformylase"/>
    <property type="match status" value="1"/>
</dbReference>
<dbReference type="PIRSF" id="PIRSF004749">
    <property type="entry name" value="Pep_def"/>
    <property type="match status" value="1"/>
</dbReference>
<dbReference type="PRINTS" id="PR01576">
    <property type="entry name" value="PDEFORMYLASE"/>
</dbReference>
<dbReference type="SUPFAM" id="SSF56420">
    <property type="entry name" value="Peptide deformylase"/>
    <property type="match status" value="1"/>
</dbReference>